<sequence length="553" mass="61814">MAASTSGYSGVLFRLRKYANKSQSLCHIGNSNFIIRTTWTTGCKHQHQLNTQIESLPQMVGVVGLEIHAQIHSKSKLFSGSHVSFSDPPNSLVSHFDASLPGTLPVLNRRCVEAAVLTGLALNCTINKKSLFDRKHYFYADMPAGYQITQQRLPIAVNGTLSYSHFEGRKRNHVVTKSVKIKQIQLEQDSGKSLHDDERSQTLIDLNRAGVGLMELVMEPEMCCGEEAGAAVRELQLILQALGTCQANMAEGQLRVDANVSVHHPGEPLGVRTEVKNINSVRHLAKAIDYEIQRQMEVLQSGGTVLNETRAFDSKSGITIPMRDKEGLQDYRFMPEPNLPPLFVYESEASVPAGADSTQLVLIDRLSSQLPELPSVTRTRLVETYGILREHSFTLVNEDGLVDYFESVVKMTKTEPRKVIGWVMNELMGNLNLQNLKVSQSPVSPCALAEMINLVRSGHISSSTAKKVFQEMWKTPEKTVEQIVKEQDLWMINDKEELRQICQRIVDSHSEEVQIIRGGNKKVLNKLMGEIQKETKGKTNPLQVKAILEEMIF</sequence>
<reference key="1">
    <citation type="journal article" date="2013" name="Nature">
        <title>The zebrafish reference genome sequence and its relationship to the human genome.</title>
        <authorList>
            <person name="Howe K."/>
            <person name="Clark M.D."/>
            <person name="Torroja C.F."/>
            <person name="Torrance J."/>
            <person name="Berthelot C."/>
            <person name="Muffato M."/>
            <person name="Collins J.E."/>
            <person name="Humphray S."/>
            <person name="McLaren K."/>
            <person name="Matthews L."/>
            <person name="McLaren S."/>
            <person name="Sealy I."/>
            <person name="Caccamo M."/>
            <person name="Churcher C."/>
            <person name="Scott C."/>
            <person name="Barrett J.C."/>
            <person name="Koch R."/>
            <person name="Rauch G.J."/>
            <person name="White S."/>
            <person name="Chow W."/>
            <person name="Kilian B."/>
            <person name="Quintais L.T."/>
            <person name="Guerra-Assuncao J.A."/>
            <person name="Zhou Y."/>
            <person name="Gu Y."/>
            <person name="Yen J."/>
            <person name="Vogel J.H."/>
            <person name="Eyre T."/>
            <person name="Redmond S."/>
            <person name="Banerjee R."/>
            <person name="Chi J."/>
            <person name="Fu B."/>
            <person name="Langley E."/>
            <person name="Maguire S.F."/>
            <person name="Laird G.K."/>
            <person name="Lloyd D."/>
            <person name="Kenyon E."/>
            <person name="Donaldson S."/>
            <person name="Sehra H."/>
            <person name="Almeida-King J."/>
            <person name="Loveland J."/>
            <person name="Trevanion S."/>
            <person name="Jones M."/>
            <person name="Quail M."/>
            <person name="Willey D."/>
            <person name="Hunt A."/>
            <person name="Burton J."/>
            <person name="Sims S."/>
            <person name="McLay K."/>
            <person name="Plumb B."/>
            <person name="Davis J."/>
            <person name="Clee C."/>
            <person name="Oliver K."/>
            <person name="Clark R."/>
            <person name="Riddle C."/>
            <person name="Elliot D."/>
            <person name="Threadgold G."/>
            <person name="Harden G."/>
            <person name="Ware D."/>
            <person name="Begum S."/>
            <person name="Mortimore B."/>
            <person name="Kerry G."/>
            <person name="Heath P."/>
            <person name="Phillimore B."/>
            <person name="Tracey A."/>
            <person name="Corby N."/>
            <person name="Dunn M."/>
            <person name="Johnson C."/>
            <person name="Wood J."/>
            <person name="Clark S."/>
            <person name="Pelan S."/>
            <person name="Griffiths G."/>
            <person name="Smith M."/>
            <person name="Glithero R."/>
            <person name="Howden P."/>
            <person name="Barker N."/>
            <person name="Lloyd C."/>
            <person name="Stevens C."/>
            <person name="Harley J."/>
            <person name="Holt K."/>
            <person name="Panagiotidis G."/>
            <person name="Lovell J."/>
            <person name="Beasley H."/>
            <person name="Henderson C."/>
            <person name="Gordon D."/>
            <person name="Auger K."/>
            <person name="Wright D."/>
            <person name="Collins J."/>
            <person name="Raisen C."/>
            <person name="Dyer L."/>
            <person name="Leung K."/>
            <person name="Robertson L."/>
            <person name="Ambridge K."/>
            <person name="Leongamornlert D."/>
            <person name="McGuire S."/>
            <person name="Gilderthorp R."/>
            <person name="Griffiths C."/>
            <person name="Manthravadi D."/>
            <person name="Nichol S."/>
            <person name="Barker G."/>
            <person name="Whitehead S."/>
            <person name="Kay M."/>
            <person name="Brown J."/>
            <person name="Murnane C."/>
            <person name="Gray E."/>
            <person name="Humphries M."/>
            <person name="Sycamore N."/>
            <person name="Barker D."/>
            <person name="Saunders D."/>
            <person name="Wallis J."/>
            <person name="Babbage A."/>
            <person name="Hammond S."/>
            <person name="Mashreghi-Mohammadi M."/>
            <person name="Barr L."/>
            <person name="Martin S."/>
            <person name="Wray P."/>
            <person name="Ellington A."/>
            <person name="Matthews N."/>
            <person name="Ellwood M."/>
            <person name="Woodmansey R."/>
            <person name="Clark G."/>
            <person name="Cooper J."/>
            <person name="Tromans A."/>
            <person name="Grafham D."/>
            <person name="Skuce C."/>
            <person name="Pandian R."/>
            <person name="Andrews R."/>
            <person name="Harrison E."/>
            <person name="Kimberley A."/>
            <person name="Garnett J."/>
            <person name="Fosker N."/>
            <person name="Hall R."/>
            <person name="Garner P."/>
            <person name="Kelly D."/>
            <person name="Bird C."/>
            <person name="Palmer S."/>
            <person name="Gehring I."/>
            <person name="Berger A."/>
            <person name="Dooley C.M."/>
            <person name="Ersan-Urun Z."/>
            <person name="Eser C."/>
            <person name="Geiger H."/>
            <person name="Geisler M."/>
            <person name="Karotki L."/>
            <person name="Kirn A."/>
            <person name="Konantz J."/>
            <person name="Konantz M."/>
            <person name="Oberlander M."/>
            <person name="Rudolph-Geiger S."/>
            <person name="Teucke M."/>
            <person name="Lanz C."/>
            <person name="Raddatz G."/>
            <person name="Osoegawa K."/>
            <person name="Zhu B."/>
            <person name="Rapp A."/>
            <person name="Widaa S."/>
            <person name="Langford C."/>
            <person name="Yang F."/>
            <person name="Schuster S.C."/>
            <person name="Carter N.P."/>
            <person name="Harrow J."/>
            <person name="Ning Z."/>
            <person name="Herrero J."/>
            <person name="Searle S.M."/>
            <person name="Enright A."/>
            <person name="Geisler R."/>
            <person name="Plasterk R.H."/>
            <person name="Lee C."/>
            <person name="Westerfield M."/>
            <person name="de Jong P.J."/>
            <person name="Zon L.I."/>
            <person name="Postlethwait J.H."/>
            <person name="Nusslein-Volhard C."/>
            <person name="Hubbard T.J."/>
            <person name="Roest Crollius H."/>
            <person name="Rogers J."/>
            <person name="Stemple D.L."/>
        </authorList>
    </citation>
    <scope>NUCLEOTIDE SEQUENCE [LARGE SCALE GENOMIC DNA]</scope>
    <source>
        <strain>Tuebingen</strain>
    </source>
</reference>
<evidence type="ECO:0000255" key="1">
    <source>
        <dbReference type="HAMAP-Rule" id="MF_03147"/>
    </source>
</evidence>
<dbReference type="EC" id="6.3.5.-" evidence="1"/>
<dbReference type="EMBL" id="AL772332">
    <property type="protein sequence ID" value="CAE30383.2"/>
    <property type="molecule type" value="Genomic_DNA"/>
</dbReference>
<dbReference type="EMBL" id="CT573492">
    <property type="protein sequence ID" value="CAE30383.2"/>
    <property type="status" value="JOINED"/>
    <property type="molecule type" value="Genomic_DNA"/>
</dbReference>
<dbReference type="EMBL" id="CT573492">
    <property type="protein sequence ID" value="CAX15470.1"/>
    <property type="molecule type" value="Genomic_DNA"/>
</dbReference>
<dbReference type="EMBL" id="AL772332">
    <property type="protein sequence ID" value="CAX15470.1"/>
    <property type="status" value="JOINED"/>
    <property type="molecule type" value="Genomic_DNA"/>
</dbReference>
<dbReference type="RefSeq" id="NP_001013464.2">
    <property type="nucleotide sequence ID" value="NM_001013446.3"/>
</dbReference>
<dbReference type="SMR" id="Q7T010"/>
<dbReference type="FunCoup" id="Q7T010">
    <property type="interactions" value="1017"/>
</dbReference>
<dbReference type="STRING" id="7955.ENSDARP00000093298"/>
<dbReference type="PaxDb" id="7955-ENSDARP00000093298"/>
<dbReference type="Ensembl" id="ENSDART00000102522">
    <property type="protein sequence ID" value="ENSDARP00000093298"/>
    <property type="gene ID" value="ENSDARG00000037309"/>
</dbReference>
<dbReference type="GeneID" id="541317"/>
<dbReference type="KEGG" id="dre:541317"/>
<dbReference type="AGR" id="ZFIN:ZDB-GENE-040724-131"/>
<dbReference type="CTD" id="5188"/>
<dbReference type="ZFIN" id="ZDB-GENE-040724-131">
    <property type="gene designation" value="gatb"/>
</dbReference>
<dbReference type="eggNOG" id="KOG2438">
    <property type="taxonomic scope" value="Eukaryota"/>
</dbReference>
<dbReference type="HOGENOM" id="CLU_019240_1_1_1"/>
<dbReference type="InParanoid" id="Q7T010"/>
<dbReference type="OMA" id="ARKWWMG"/>
<dbReference type="OrthoDB" id="1722066at2759"/>
<dbReference type="PhylomeDB" id="Q7T010"/>
<dbReference type="TreeFam" id="TF314355"/>
<dbReference type="PRO" id="PR:Q7T010"/>
<dbReference type="Proteomes" id="UP000000437">
    <property type="component" value="Alternate scaffold 1"/>
</dbReference>
<dbReference type="Proteomes" id="UP000000437">
    <property type="component" value="Chromosome 1"/>
</dbReference>
<dbReference type="Bgee" id="ENSDARG00000037309">
    <property type="expression patterns" value="Expressed in cardiac ventricle and 26 other cell types or tissues"/>
</dbReference>
<dbReference type="GO" id="GO:0030956">
    <property type="term" value="C:glutamyl-tRNA(Gln) amidotransferase complex"/>
    <property type="evidence" value="ECO:0000318"/>
    <property type="project" value="GO_Central"/>
</dbReference>
<dbReference type="GO" id="GO:0005739">
    <property type="term" value="C:mitochondrion"/>
    <property type="evidence" value="ECO:0000318"/>
    <property type="project" value="GO_Central"/>
</dbReference>
<dbReference type="GO" id="GO:0005524">
    <property type="term" value="F:ATP binding"/>
    <property type="evidence" value="ECO:0007669"/>
    <property type="project" value="UniProtKB-KW"/>
</dbReference>
<dbReference type="GO" id="GO:0050567">
    <property type="term" value="F:glutaminyl-tRNA synthase (glutamine-hydrolyzing) activity"/>
    <property type="evidence" value="ECO:0000318"/>
    <property type="project" value="GO_Central"/>
</dbReference>
<dbReference type="GO" id="GO:0070681">
    <property type="term" value="P:glutaminyl-tRNAGln biosynthesis via transamidation"/>
    <property type="evidence" value="ECO:0000318"/>
    <property type="project" value="GO_Central"/>
</dbReference>
<dbReference type="GO" id="GO:0032543">
    <property type="term" value="P:mitochondrial translation"/>
    <property type="evidence" value="ECO:0000318"/>
    <property type="project" value="GO_Central"/>
</dbReference>
<dbReference type="FunFam" id="1.10.10.410:FF:000001">
    <property type="entry name" value="Aspartyl/glutamyl-tRNA(Asn/Gln) amidotransferase subunit B"/>
    <property type="match status" value="1"/>
</dbReference>
<dbReference type="Gene3D" id="1.10.10.410">
    <property type="match status" value="1"/>
</dbReference>
<dbReference type="HAMAP" id="MF_00121">
    <property type="entry name" value="GatB"/>
    <property type="match status" value="1"/>
</dbReference>
<dbReference type="InterPro" id="IPR017959">
    <property type="entry name" value="Asn/Gln-tRNA_amidoTrfase_suB/E"/>
</dbReference>
<dbReference type="InterPro" id="IPR006075">
    <property type="entry name" value="Asn/Gln-tRNA_Trfase_suB/E_cat"/>
</dbReference>
<dbReference type="InterPro" id="IPR018027">
    <property type="entry name" value="Asn/Gln_amidotransferase"/>
</dbReference>
<dbReference type="InterPro" id="IPR003789">
    <property type="entry name" value="Asn/Gln_tRNA_amidoTrase-B-like"/>
</dbReference>
<dbReference type="InterPro" id="IPR004413">
    <property type="entry name" value="GatB"/>
</dbReference>
<dbReference type="InterPro" id="IPR023168">
    <property type="entry name" value="GatB_Yqey_C_2"/>
</dbReference>
<dbReference type="InterPro" id="IPR014746">
    <property type="entry name" value="Gln_synth/guanido_kin_cat_dom"/>
</dbReference>
<dbReference type="NCBIfam" id="TIGR00133">
    <property type="entry name" value="gatB"/>
    <property type="match status" value="1"/>
</dbReference>
<dbReference type="NCBIfam" id="NF004012">
    <property type="entry name" value="PRK05477.1-2"/>
    <property type="match status" value="1"/>
</dbReference>
<dbReference type="NCBIfam" id="NF004014">
    <property type="entry name" value="PRK05477.1-4"/>
    <property type="match status" value="1"/>
</dbReference>
<dbReference type="PANTHER" id="PTHR11659">
    <property type="entry name" value="GLUTAMYL-TRNA GLN AMIDOTRANSFERASE SUBUNIT B MITOCHONDRIAL AND PROKARYOTIC PET112-RELATED"/>
    <property type="match status" value="1"/>
</dbReference>
<dbReference type="PANTHER" id="PTHR11659:SF0">
    <property type="entry name" value="GLUTAMYL-TRNA(GLN) AMIDOTRANSFERASE SUBUNIT B, MITOCHONDRIAL"/>
    <property type="match status" value="1"/>
</dbReference>
<dbReference type="Pfam" id="PF02934">
    <property type="entry name" value="GatB_N"/>
    <property type="match status" value="1"/>
</dbReference>
<dbReference type="Pfam" id="PF02637">
    <property type="entry name" value="GatB_Yqey"/>
    <property type="match status" value="1"/>
</dbReference>
<dbReference type="SMART" id="SM00845">
    <property type="entry name" value="GatB_Yqey"/>
    <property type="match status" value="1"/>
</dbReference>
<dbReference type="SUPFAM" id="SSF89095">
    <property type="entry name" value="GatB/YqeY motif"/>
    <property type="match status" value="1"/>
</dbReference>
<dbReference type="SUPFAM" id="SSF55931">
    <property type="entry name" value="Glutamine synthetase/guanido kinase"/>
    <property type="match status" value="1"/>
</dbReference>
<name>GATB_DANRE</name>
<gene>
    <name evidence="1" type="primary">gatb</name>
    <name evidence="1" type="synonym">pet112</name>
    <name evidence="1" type="synonym">pet112l</name>
    <name type="ORF">si:ch211-150a22.1</name>
</gene>
<keyword id="KW-0067">ATP-binding</keyword>
<keyword id="KW-0436">Ligase</keyword>
<keyword id="KW-0496">Mitochondrion</keyword>
<keyword id="KW-0547">Nucleotide-binding</keyword>
<keyword id="KW-0648">Protein biosynthesis</keyword>
<keyword id="KW-1185">Reference proteome</keyword>
<keyword id="KW-0809">Transit peptide</keyword>
<organism>
    <name type="scientific">Danio rerio</name>
    <name type="common">Zebrafish</name>
    <name type="synonym">Brachydanio rerio</name>
    <dbReference type="NCBI Taxonomy" id="7955"/>
    <lineage>
        <taxon>Eukaryota</taxon>
        <taxon>Metazoa</taxon>
        <taxon>Chordata</taxon>
        <taxon>Craniata</taxon>
        <taxon>Vertebrata</taxon>
        <taxon>Euteleostomi</taxon>
        <taxon>Actinopterygii</taxon>
        <taxon>Neopterygii</taxon>
        <taxon>Teleostei</taxon>
        <taxon>Ostariophysi</taxon>
        <taxon>Cypriniformes</taxon>
        <taxon>Danionidae</taxon>
        <taxon>Danioninae</taxon>
        <taxon>Danio</taxon>
    </lineage>
</organism>
<protein>
    <recommendedName>
        <fullName evidence="1">Glutamyl-tRNA(Gln) amidotransferase subunit B, mitochondrial</fullName>
        <shortName evidence="1">Glu-AdT subunit B</shortName>
        <ecNumber evidence="1">6.3.5.-</ecNumber>
    </recommendedName>
    <alternativeName>
        <fullName>Cytochrome c oxidase assembly factor PET112 homolog</fullName>
    </alternativeName>
    <alternativeName>
        <fullName evidence="1">PET112-like</fullName>
    </alternativeName>
</protein>
<proteinExistence type="inferred from homology"/>
<feature type="transit peptide" description="Mitochondrion" evidence="1">
    <location>
        <begin position="1"/>
        <end position="18"/>
    </location>
</feature>
<feature type="chain" id="PRO_0000413220" description="Glutamyl-tRNA(Gln) amidotransferase subunit B, mitochondrial">
    <location>
        <begin position="19"/>
        <end position="553"/>
    </location>
</feature>
<comment type="function">
    <text evidence="1">Allows the formation of correctly charged Gln-tRNA(Gln) through the transamidation of misacylated Glu-tRNA(Gln) in the mitochondria. The reaction takes place in the presence of glutamine and ATP through an activated gamma-phospho-Glu-tRNA(Gln).</text>
</comment>
<comment type="catalytic activity">
    <reaction evidence="1">
        <text>L-glutamyl-tRNA(Gln) + L-glutamine + ATP + H2O = L-glutaminyl-tRNA(Gln) + L-glutamate + ADP + phosphate + H(+)</text>
        <dbReference type="Rhea" id="RHEA:17521"/>
        <dbReference type="Rhea" id="RHEA-COMP:9681"/>
        <dbReference type="Rhea" id="RHEA-COMP:9684"/>
        <dbReference type="ChEBI" id="CHEBI:15377"/>
        <dbReference type="ChEBI" id="CHEBI:15378"/>
        <dbReference type="ChEBI" id="CHEBI:29985"/>
        <dbReference type="ChEBI" id="CHEBI:30616"/>
        <dbReference type="ChEBI" id="CHEBI:43474"/>
        <dbReference type="ChEBI" id="CHEBI:58359"/>
        <dbReference type="ChEBI" id="CHEBI:78520"/>
        <dbReference type="ChEBI" id="CHEBI:78521"/>
        <dbReference type="ChEBI" id="CHEBI:456216"/>
    </reaction>
</comment>
<comment type="subunit">
    <text evidence="1">Subunit of the heterotrimeric GatCAB amidotransferase (AdT) complex, composed of A (qrsl1), B (gatb) and C (gatc) subunits.</text>
</comment>
<comment type="subcellular location">
    <subcellularLocation>
        <location evidence="1">Mitochondrion</location>
    </subcellularLocation>
</comment>
<comment type="similarity">
    <text evidence="1">Belongs to the GatB/GatE family. GatB subfamily.</text>
</comment>
<accession>Q7T010</accession>